<accession>Q7SY24</accession>
<gene>
    <name type="primary">prkcbb</name>
    <name type="synonym">prkcb1</name>
</gene>
<reference key="1">
    <citation type="submission" date="2003-07" db="EMBL/GenBank/DDBJ databases">
        <authorList>
            <consortium name="NIH - Zebrafish Gene Collection (ZGC) project"/>
        </authorList>
    </citation>
    <scope>NUCLEOTIDE SEQUENCE [LARGE SCALE MRNA]</scope>
</reference>
<keyword id="KW-1064">Adaptive immunity</keyword>
<keyword id="KW-0053">Apoptosis</keyword>
<keyword id="KW-0067">ATP-binding</keyword>
<keyword id="KW-0106">Calcium</keyword>
<keyword id="KW-0156">Chromatin regulator</keyword>
<keyword id="KW-0963">Cytoplasm</keyword>
<keyword id="KW-0391">Immunity</keyword>
<keyword id="KW-0418">Kinase</keyword>
<keyword id="KW-0472">Membrane</keyword>
<keyword id="KW-0479">Metal-binding</keyword>
<keyword id="KW-0547">Nucleotide-binding</keyword>
<keyword id="KW-0539">Nucleus</keyword>
<keyword id="KW-0597">Phosphoprotein</keyword>
<keyword id="KW-1185">Reference proteome</keyword>
<keyword id="KW-0677">Repeat</keyword>
<keyword id="KW-0723">Serine/threonine-protein kinase</keyword>
<keyword id="KW-0804">Transcription</keyword>
<keyword id="KW-0805">Transcription regulation</keyword>
<keyword id="KW-0808">Transferase</keyword>
<keyword id="KW-0862">Zinc</keyword>
<keyword id="KW-0863">Zinc-finger</keyword>
<organism>
    <name type="scientific">Danio rerio</name>
    <name type="common">Zebrafish</name>
    <name type="synonym">Brachydanio rerio</name>
    <dbReference type="NCBI Taxonomy" id="7955"/>
    <lineage>
        <taxon>Eukaryota</taxon>
        <taxon>Metazoa</taxon>
        <taxon>Chordata</taxon>
        <taxon>Craniata</taxon>
        <taxon>Vertebrata</taxon>
        <taxon>Euteleostomi</taxon>
        <taxon>Actinopterygii</taxon>
        <taxon>Neopterygii</taxon>
        <taxon>Teleostei</taxon>
        <taxon>Ostariophysi</taxon>
        <taxon>Cypriniformes</taxon>
        <taxon>Danionidae</taxon>
        <taxon>Danioninae</taxon>
        <taxon>Danio</taxon>
    </lineage>
</organism>
<sequence length="670" mass="76306">MAEPANSDGEERSAPMRGFARQGALRQKNVHEVKNHKFIARFFKQPTFCSHCTDFIWGFGKQGFQCQVCCFVVHKRCHEFVTFSCPGADKGPASDDPRSKHKFKVHTYSSPTFCDHCGSLLYGLIHQGMRCDHCMMNIHKRCVANVPSLCGTDHTERRGRIQITAEIKNNVLTVSIKEAKNLVPMDPNGLSDPYVKLKLIPDPKSESKQKTKTIKCCLNPTWNETFTFNLKESDKDRRLSVEIWDWDLTSRNDFMGSLSFGISELQKQGVDGWFKLLSQEEGEYFNVPVPPEGEEGNEELRQKFERAKIGPSKTDGSSSNAISKFDSNGNRDRMKLSDFNFLMVLGKGSFGKVMLAERKGADELFAIKILKKDVVIQDDDVECTMVEKRVLALSGKPPFLTQLHSCFQTMDRLYFVMEYINGGDLMYHIQQVGKFKEPHAVFYAAEIAIGLFFLHSKGVIYRDLKLDNVMLDAEGHIKIADFGMCKENMLDGVTTKTFCGTPDYIAPEIIAYQPYGKSVDWWAFGVLLYEMLAGQPPFDGEDEDELFQSIMEHHVSYPKSMSKEAVAICKGLMTKHPGKRLGCGPEGERDIREHGFFRYMDWEKLEHREVQPPFKPKACGRDAENFDRFFTRHPPVLTPPDQEVIMNLDQDEFEGFSFINPEFPAMEAQS</sequence>
<name>KPCB_DANRE</name>
<proteinExistence type="evidence at transcript level"/>
<comment type="function">
    <text evidence="1">Calcium-activated and phospholipid-dependent serine/threonine-protein kinase involved in various processes such as regulation of the B-cell receptor (BCR) signalosome, apoptosis and transcription regulation. Plays a key role in B-cell activation and function by regulating BCR-induced NF-kappa-B activation and B-cell survival. Required for recruitment and activation of the IKK kinase to lipid rafts and mediates phosphorylation of card11/carma1, leading to activate the NF-kappa-B signaling. Involved in apoptosis following oxidative damage: in case of oxidative conditions, specifically phosphorylates isoform p66Shc of shc1, leading to mitochondrial accumulation of p66Shc, where p66Shc acts as a reactive oxygen species producer. Acts as a coactivator of androgen receptor (andr)-dependent transcription, by being recruited to ANDR target genes and specifically mediating phosphorylation of 'Thr-6' of histone H3 (H3T6ph), a specific tag for epigenetic transcriptional activation (By similarity).</text>
</comment>
<comment type="catalytic activity">
    <reaction evidence="2">
        <text>L-seryl-[protein] + ATP = O-phospho-L-seryl-[protein] + ADP + H(+)</text>
        <dbReference type="Rhea" id="RHEA:17989"/>
        <dbReference type="Rhea" id="RHEA-COMP:9863"/>
        <dbReference type="Rhea" id="RHEA-COMP:11604"/>
        <dbReference type="ChEBI" id="CHEBI:15378"/>
        <dbReference type="ChEBI" id="CHEBI:29999"/>
        <dbReference type="ChEBI" id="CHEBI:30616"/>
        <dbReference type="ChEBI" id="CHEBI:83421"/>
        <dbReference type="ChEBI" id="CHEBI:456216"/>
        <dbReference type="EC" id="2.7.11.13"/>
    </reaction>
</comment>
<comment type="catalytic activity">
    <reaction evidence="2">
        <text>L-threonyl-[protein] + ATP = O-phospho-L-threonyl-[protein] + ADP + H(+)</text>
        <dbReference type="Rhea" id="RHEA:46608"/>
        <dbReference type="Rhea" id="RHEA-COMP:11060"/>
        <dbReference type="Rhea" id="RHEA-COMP:11605"/>
        <dbReference type="ChEBI" id="CHEBI:15378"/>
        <dbReference type="ChEBI" id="CHEBI:30013"/>
        <dbReference type="ChEBI" id="CHEBI:30616"/>
        <dbReference type="ChEBI" id="CHEBI:61977"/>
        <dbReference type="ChEBI" id="CHEBI:456216"/>
        <dbReference type="EC" id="2.7.11.13"/>
    </reaction>
</comment>
<comment type="cofactor">
    <cofactor evidence="4">
        <name>Ca(2+)</name>
        <dbReference type="ChEBI" id="CHEBI:29108"/>
    </cofactor>
    <text evidence="3">Binds 3 Ca(2+) ions per subunit. The ions are bound to the C2 domain.</text>
</comment>
<comment type="activity regulation">
    <text evidence="1">Activated by diacylglycerol which in turn phosphorylates a range of cellular proteins.</text>
</comment>
<comment type="subcellular location">
    <subcellularLocation>
        <location evidence="1">Cytoplasm</location>
    </subcellularLocation>
    <subcellularLocation>
        <location evidence="1">Nucleus</location>
    </subcellularLocation>
    <subcellularLocation>
        <location evidence="1">Membrane</location>
        <topology evidence="1">Peripheral membrane protein</topology>
    </subcellularLocation>
</comment>
<comment type="PTM">
    <text evidence="1">Phosphorylation on Thr-497 within the activation loop renders it competent to autophosphorylate. Subsequent autophosphorylation of Thr-638 maintains catalytic competence, and autophosphorylation on Ser-657 appears to release the kinase into the cytosol (By similarity).</text>
</comment>
<comment type="similarity">
    <text evidence="9">Belongs to the protein kinase superfamily. AGC Ser/Thr protein kinase family. PKC subfamily.</text>
</comment>
<feature type="initiator methionine" description="Removed" evidence="1">
    <location>
        <position position="1"/>
    </location>
</feature>
<feature type="chain" id="PRO_0000394258" description="Protein kinase C beta type">
    <location>
        <begin position="2"/>
        <end position="670"/>
    </location>
</feature>
<feature type="domain" description="C2" evidence="4">
    <location>
        <begin position="157"/>
        <end position="274"/>
    </location>
</feature>
<feature type="domain" description="Protein kinase" evidence="5">
    <location>
        <begin position="339"/>
        <end position="597"/>
    </location>
</feature>
<feature type="domain" description="AGC-kinase C-terminal" evidence="7">
    <location>
        <begin position="598"/>
        <end position="668"/>
    </location>
</feature>
<feature type="zinc finger region" description="Phorbol-ester/DAG-type 1" evidence="6">
    <location>
        <begin position="35"/>
        <end position="85"/>
    </location>
</feature>
<feature type="zinc finger region" description="Phorbol-ester/DAG-type 2" evidence="6">
    <location>
        <begin position="100"/>
        <end position="150"/>
    </location>
</feature>
<feature type="active site" description="Proton acceptor" evidence="5 8">
    <location>
        <position position="463"/>
    </location>
</feature>
<feature type="binding site" evidence="3">
    <location>
        <position position="185"/>
    </location>
    <ligand>
        <name>Ca(2+)</name>
        <dbReference type="ChEBI" id="CHEBI:29108"/>
        <label>1</label>
    </ligand>
</feature>
<feature type="binding site" evidence="3">
    <location>
        <position position="186"/>
    </location>
    <ligand>
        <name>Ca(2+)</name>
        <dbReference type="ChEBI" id="CHEBI:29108"/>
        <label>1</label>
    </ligand>
</feature>
<feature type="binding site" evidence="3">
    <location>
        <position position="186"/>
    </location>
    <ligand>
        <name>Ca(2+)</name>
        <dbReference type="ChEBI" id="CHEBI:29108"/>
        <label>2</label>
    </ligand>
</feature>
<feature type="binding site" evidence="3">
    <location>
        <position position="192"/>
    </location>
    <ligand>
        <name>Ca(2+)</name>
        <dbReference type="ChEBI" id="CHEBI:29108"/>
        <label>2</label>
    </ligand>
</feature>
<feature type="binding site" evidence="3">
    <location>
        <position position="245"/>
    </location>
    <ligand>
        <name>Ca(2+)</name>
        <dbReference type="ChEBI" id="CHEBI:29108"/>
        <label>1</label>
    </ligand>
</feature>
<feature type="binding site" evidence="3">
    <location>
        <position position="245"/>
    </location>
    <ligand>
        <name>Ca(2+)</name>
        <dbReference type="ChEBI" id="CHEBI:29108"/>
        <label>2</label>
    </ligand>
</feature>
<feature type="binding site" evidence="3">
    <location>
        <position position="246"/>
    </location>
    <ligand>
        <name>Ca(2+)</name>
        <dbReference type="ChEBI" id="CHEBI:29108"/>
        <label>2</label>
    </ligand>
</feature>
<feature type="binding site" evidence="3">
    <location>
        <position position="247"/>
    </location>
    <ligand>
        <name>Ca(2+)</name>
        <dbReference type="ChEBI" id="CHEBI:29108"/>
        <label>1</label>
    </ligand>
</feature>
<feature type="binding site" evidence="3">
    <location>
        <position position="247"/>
    </location>
    <ligand>
        <name>Ca(2+)</name>
        <dbReference type="ChEBI" id="CHEBI:29108"/>
        <label>2</label>
    </ligand>
</feature>
<feature type="binding site" evidence="3">
    <location>
        <position position="247"/>
    </location>
    <ligand>
        <name>Ca(2+)</name>
        <dbReference type="ChEBI" id="CHEBI:29108"/>
        <label>3</label>
    </ligand>
</feature>
<feature type="binding site" evidence="3">
    <location>
        <position position="250"/>
    </location>
    <ligand>
        <name>Ca(2+)</name>
        <dbReference type="ChEBI" id="CHEBI:29108"/>
        <label>3</label>
    </ligand>
</feature>
<feature type="binding site" evidence="3">
    <location>
        <position position="251"/>
    </location>
    <ligand>
        <name>Ca(2+)</name>
        <dbReference type="ChEBI" id="CHEBI:29108"/>
        <label>3</label>
    </ligand>
</feature>
<feature type="binding site" evidence="3">
    <location>
        <position position="253"/>
    </location>
    <ligand>
        <name>Ca(2+)</name>
        <dbReference type="ChEBI" id="CHEBI:29108"/>
        <label>1</label>
    </ligand>
</feature>
<feature type="binding site" evidence="3">
    <location>
        <position position="253"/>
    </location>
    <ligand>
        <name>Ca(2+)</name>
        <dbReference type="ChEBI" id="CHEBI:29108"/>
        <label>3</label>
    </ligand>
</feature>
<feature type="binding site" evidence="5">
    <location>
        <begin position="345"/>
        <end position="353"/>
    </location>
    <ligand>
        <name>ATP</name>
        <dbReference type="ChEBI" id="CHEBI:30616"/>
    </ligand>
</feature>
<feature type="binding site" evidence="5">
    <location>
        <position position="368"/>
    </location>
    <ligand>
        <name>ATP</name>
        <dbReference type="ChEBI" id="CHEBI:30616"/>
    </ligand>
</feature>
<feature type="modified residue" description="Phosphothreonine" evidence="1">
    <location>
        <position position="497"/>
    </location>
</feature>
<feature type="modified residue" description="Phosphothreonine" evidence="1">
    <location>
        <position position="501"/>
    </location>
</feature>
<feature type="modified residue" description="Phosphothreonine; by autocatalysis" evidence="3">
    <location>
        <position position="631"/>
    </location>
</feature>
<feature type="modified residue" description="Phosphothreonine; by autocatalysis" evidence="1">
    <location>
        <position position="638"/>
    </location>
</feature>
<feature type="modified residue" description="Phosphoserine; by autocatalysis" evidence="1">
    <location>
        <position position="657"/>
    </location>
</feature>
<dbReference type="EC" id="2.7.11.13" evidence="2"/>
<dbReference type="EMBL" id="BC055154">
    <property type="protein sequence ID" value="AAH55154.1"/>
    <property type="molecule type" value="mRNA"/>
</dbReference>
<dbReference type="RefSeq" id="NP_957272.1">
    <property type="nucleotide sequence ID" value="NM_200978.1"/>
</dbReference>
<dbReference type="SMR" id="Q7SY24"/>
<dbReference type="FunCoup" id="Q7SY24">
    <property type="interactions" value="1071"/>
</dbReference>
<dbReference type="STRING" id="7955.ENSDARP00000038918"/>
<dbReference type="PaxDb" id="7955-ENSDARP00000038918"/>
<dbReference type="Ensembl" id="ENSDART00000029451">
    <property type="protein sequence ID" value="ENSDARP00000038918"/>
    <property type="gene ID" value="ENSDARG00000022254"/>
</dbReference>
<dbReference type="GeneID" id="393953"/>
<dbReference type="KEGG" id="dre:393953"/>
<dbReference type="AGR" id="ZFIN:ZDB-GENE-040426-1178"/>
<dbReference type="CTD" id="393953"/>
<dbReference type="ZFIN" id="ZDB-GENE-040426-1178">
    <property type="gene designation" value="prkcbb"/>
</dbReference>
<dbReference type="eggNOG" id="KOG0696">
    <property type="taxonomic scope" value="Eukaryota"/>
</dbReference>
<dbReference type="HOGENOM" id="CLU_000288_54_2_1"/>
<dbReference type="InParanoid" id="Q7SY24"/>
<dbReference type="OrthoDB" id="63267at2759"/>
<dbReference type="PhylomeDB" id="Q7SY24"/>
<dbReference type="TreeFam" id="TF351133"/>
<dbReference type="Reactome" id="R-DRE-114516">
    <property type="pathway name" value="Disinhibition of SNARE formation"/>
</dbReference>
<dbReference type="Reactome" id="R-DRE-1169091">
    <property type="pathway name" value="Activation of NF-kappaB in B cells"/>
</dbReference>
<dbReference type="Reactome" id="R-DRE-4419969">
    <property type="pathway name" value="Depolymerization of the Nuclear Lamina"/>
</dbReference>
<dbReference type="Reactome" id="R-DRE-5218921">
    <property type="pathway name" value="VEGFR2 mediated cell proliferation"/>
</dbReference>
<dbReference type="Reactome" id="R-DRE-5668599">
    <property type="pathway name" value="RHO GTPases Activate NADPH Oxidases"/>
</dbReference>
<dbReference type="Reactome" id="R-DRE-76005">
    <property type="pathway name" value="Response to elevated platelet cytosolic Ca2+"/>
</dbReference>
<dbReference type="PRO" id="PR:Q7SY24"/>
<dbReference type="Proteomes" id="UP000000437">
    <property type="component" value="Chromosome 3"/>
</dbReference>
<dbReference type="Bgee" id="ENSDARG00000022254">
    <property type="expression patterns" value="Expressed in granulocyte and 34 other cell types or tissues"/>
</dbReference>
<dbReference type="ExpressionAtlas" id="Q7SY24">
    <property type="expression patterns" value="baseline and differential"/>
</dbReference>
<dbReference type="GO" id="GO:0005737">
    <property type="term" value="C:cytoplasm"/>
    <property type="evidence" value="ECO:0007669"/>
    <property type="project" value="UniProtKB-SubCell"/>
</dbReference>
<dbReference type="GO" id="GO:0016020">
    <property type="term" value="C:membrane"/>
    <property type="evidence" value="ECO:0007669"/>
    <property type="project" value="UniProtKB-SubCell"/>
</dbReference>
<dbReference type="GO" id="GO:0005634">
    <property type="term" value="C:nucleus"/>
    <property type="evidence" value="ECO:0000250"/>
    <property type="project" value="UniProtKB"/>
</dbReference>
<dbReference type="GO" id="GO:0005524">
    <property type="term" value="F:ATP binding"/>
    <property type="evidence" value="ECO:0007669"/>
    <property type="project" value="UniProtKB-KW"/>
</dbReference>
<dbReference type="GO" id="GO:0004698">
    <property type="term" value="F:calcium,diacylglycerol-dependent serine/threonine kinase activity"/>
    <property type="evidence" value="ECO:0000250"/>
    <property type="project" value="UniProtKB"/>
</dbReference>
<dbReference type="GO" id="GO:0003682">
    <property type="term" value="F:chromatin binding"/>
    <property type="evidence" value="ECO:0000250"/>
    <property type="project" value="UniProtKB"/>
</dbReference>
<dbReference type="GO" id="GO:0042393">
    <property type="term" value="F:histone binding"/>
    <property type="evidence" value="ECO:0000250"/>
    <property type="project" value="UniProtKB"/>
</dbReference>
<dbReference type="GO" id="GO:0035403">
    <property type="term" value="F:histone H3T6 kinase activity"/>
    <property type="evidence" value="ECO:0000250"/>
    <property type="project" value="UniProtKB"/>
</dbReference>
<dbReference type="GO" id="GO:0050681">
    <property type="term" value="F:nuclear androgen receptor binding"/>
    <property type="evidence" value="ECO:0000250"/>
    <property type="project" value="UniProtKB"/>
</dbReference>
<dbReference type="GO" id="GO:0106310">
    <property type="term" value="F:protein serine kinase activity"/>
    <property type="evidence" value="ECO:0007669"/>
    <property type="project" value="RHEA"/>
</dbReference>
<dbReference type="GO" id="GO:0004674">
    <property type="term" value="F:protein serine/threonine kinase activity"/>
    <property type="evidence" value="ECO:0000318"/>
    <property type="project" value="GO_Central"/>
</dbReference>
<dbReference type="GO" id="GO:0003713">
    <property type="term" value="F:transcription coactivator activity"/>
    <property type="evidence" value="ECO:0000250"/>
    <property type="project" value="UniProtKB"/>
</dbReference>
<dbReference type="GO" id="GO:0008270">
    <property type="term" value="F:zinc ion binding"/>
    <property type="evidence" value="ECO:0007669"/>
    <property type="project" value="UniProtKB-KW"/>
</dbReference>
<dbReference type="GO" id="GO:0002250">
    <property type="term" value="P:adaptive immune response"/>
    <property type="evidence" value="ECO:0007669"/>
    <property type="project" value="UniProtKB-KW"/>
</dbReference>
<dbReference type="GO" id="GO:0006915">
    <property type="term" value="P:apoptotic process"/>
    <property type="evidence" value="ECO:0007669"/>
    <property type="project" value="UniProtKB-KW"/>
</dbReference>
<dbReference type="GO" id="GO:0042113">
    <property type="term" value="P:B cell activation"/>
    <property type="evidence" value="ECO:0000250"/>
    <property type="project" value="UniProtKB"/>
</dbReference>
<dbReference type="GO" id="GO:0050853">
    <property type="term" value="P:B cell receptor signaling pathway"/>
    <property type="evidence" value="ECO:0000250"/>
    <property type="project" value="UniProtKB"/>
</dbReference>
<dbReference type="GO" id="GO:0007596">
    <property type="term" value="P:blood coagulation"/>
    <property type="evidence" value="ECO:0000315"/>
    <property type="project" value="ZFIN"/>
</dbReference>
<dbReference type="GO" id="GO:0035162">
    <property type="term" value="P:embryonic hemopoiesis"/>
    <property type="evidence" value="ECO:0000315"/>
    <property type="project" value="ZFIN"/>
</dbReference>
<dbReference type="GO" id="GO:0035556">
    <property type="term" value="P:intracellular signal transduction"/>
    <property type="evidence" value="ECO:0000318"/>
    <property type="project" value="GO_Central"/>
</dbReference>
<dbReference type="GO" id="GO:0043123">
    <property type="term" value="P:positive regulation of canonical NF-kappaB signal transduction"/>
    <property type="evidence" value="ECO:0000250"/>
    <property type="project" value="UniProtKB"/>
</dbReference>
<dbReference type="GO" id="GO:0070528">
    <property type="term" value="P:protein kinase C signaling"/>
    <property type="evidence" value="ECO:0000250"/>
    <property type="project" value="UniProtKB"/>
</dbReference>
<dbReference type="GO" id="GO:0006357">
    <property type="term" value="P:regulation of transcription by RNA polymerase II"/>
    <property type="evidence" value="ECO:0000250"/>
    <property type="project" value="UniProtKB"/>
</dbReference>
<dbReference type="CDD" id="cd20833">
    <property type="entry name" value="C1_cPKC_rpt1"/>
    <property type="match status" value="1"/>
</dbReference>
<dbReference type="CDD" id="cd20836">
    <property type="entry name" value="C1_cPKC_rpt2"/>
    <property type="match status" value="1"/>
</dbReference>
<dbReference type="CDD" id="cd04026">
    <property type="entry name" value="C2_PKC_alpha_gamma"/>
    <property type="match status" value="1"/>
</dbReference>
<dbReference type="CDD" id="cd05616">
    <property type="entry name" value="STKc_cPKC_beta"/>
    <property type="match status" value="1"/>
</dbReference>
<dbReference type="FunFam" id="2.60.40.150:FF:000012">
    <property type="entry name" value="Kinase C alpha type"/>
    <property type="match status" value="1"/>
</dbReference>
<dbReference type="FunFam" id="1.10.510.10:FF:000023">
    <property type="entry name" value="Protein kinase C"/>
    <property type="match status" value="1"/>
</dbReference>
<dbReference type="FunFam" id="3.30.200.20:FF:000080">
    <property type="entry name" value="Protein kinase C"/>
    <property type="match status" value="1"/>
</dbReference>
<dbReference type="FunFam" id="3.30.200.20:FF:000103">
    <property type="entry name" value="Protein kinase C"/>
    <property type="match status" value="1"/>
</dbReference>
<dbReference type="FunFam" id="3.30.60.20:FF:000006">
    <property type="entry name" value="Protein kinase C"/>
    <property type="match status" value="1"/>
</dbReference>
<dbReference type="FunFam" id="3.30.60.20:FF:000031">
    <property type="entry name" value="Protein kinase C alpha"/>
    <property type="match status" value="1"/>
</dbReference>
<dbReference type="Gene3D" id="3.30.60.20">
    <property type="match status" value="2"/>
</dbReference>
<dbReference type="Gene3D" id="2.60.40.150">
    <property type="entry name" value="C2 domain"/>
    <property type="match status" value="1"/>
</dbReference>
<dbReference type="Gene3D" id="3.30.200.20">
    <property type="entry name" value="Phosphorylase Kinase, domain 1"/>
    <property type="match status" value="2"/>
</dbReference>
<dbReference type="Gene3D" id="1.10.510.10">
    <property type="entry name" value="Transferase(Phosphotransferase) domain 1"/>
    <property type="match status" value="1"/>
</dbReference>
<dbReference type="InterPro" id="IPR000961">
    <property type="entry name" value="AGC-kinase_C"/>
</dbReference>
<dbReference type="InterPro" id="IPR046349">
    <property type="entry name" value="C1-like_sf"/>
</dbReference>
<dbReference type="InterPro" id="IPR000008">
    <property type="entry name" value="C2_dom"/>
</dbReference>
<dbReference type="InterPro" id="IPR035892">
    <property type="entry name" value="C2_domain_sf"/>
</dbReference>
<dbReference type="InterPro" id="IPR034664">
    <property type="entry name" value="cPKC-beta"/>
</dbReference>
<dbReference type="InterPro" id="IPR020454">
    <property type="entry name" value="DAG/PE-bd"/>
</dbReference>
<dbReference type="InterPro" id="IPR011009">
    <property type="entry name" value="Kinase-like_dom_sf"/>
</dbReference>
<dbReference type="InterPro" id="IPR002219">
    <property type="entry name" value="PE/DAG-bd"/>
</dbReference>
<dbReference type="InterPro" id="IPR017892">
    <property type="entry name" value="Pkinase_C"/>
</dbReference>
<dbReference type="InterPro" id="IPR000719">
    <property type="entry name" value="Prot_kinase_dom"/>
</dbReference>
<dbReference type="InterPro" id="IPR017441">
    <property type="entry name" value="Protein_kinase_ATP_BS"/>
</dbReference>
<dbReference type="InterPro" id="IPR014375">
    <property type="entry name" value="Protein_kinase_C_a/b/g"/>
</dbReference>
<dbReference type="InterPro" id="IPR008271">
    <property type="entry name" value="Ser/Thr_kinase_AS"/>
</dbReference>
<dbReference type="PANTHER" id="PTHR24351">
    <property type="entry name" value="RIBOSOMAL PROTEIN S6 KINASE"/>
    <property type="match status" value="1"/>
</dbReference>
<dbReference type="Pfam" id="PF00130">
    <property type="entry name" value="C1_1"/>
    <property type="match status" value="2"/>
</dbReference>
<dbReference type="Pfam" id="PF00168">
    <property type="entry name" value="C2"/>
    <property type="match status" value="1"/>
</dbReference>
<dbReference type="Pfam" id="PF00069">
    <property type="entry name" value="Pkinase"/>
    <property type="match status" value="1"/>
</dbReference>
<dbReference type="Pfam" id="PF00433">
    <property type="entry name" value="Pkinase_C"/>
    <property type="match status" value="1"/>
</dbReference>
<dbReference type="PIRSF" id="PIRSF000550">
    <property type="entry name" value="PKC_alpha"/>
    <property type="match status" value="1"/>
</dbReference>
<dbReference type="PRINTS" id="PR00360">
    <property type="entry name" value="C2DOMAIN"/>
</dbReference>
<dbReference type="PRINTS" id="PR00008">
    <property type="entry name" value="DAGPEDOMAIN"/>
</dbReference>
<dbReference type="SMART" id="SM00109">
    <property type="entry name" value="C1"/>
    <property type="match status" value="2"/>
</dbReference>
<dbReference type="SMART" id="SM00239">
    <property type="entry name" value="C2"/>
    <property type="match status" value="1"/>
</dbReference>
<dbReference type="SMART" id="SM00133">
    <property type="entry name" value="S_TK_X"/>
    <property type="match status" value="1"/>
</dbReference>
<dbReference type="SMART" id="SM00220">
    <property type="entry name" value="S_TKc"/>
    <property type="match status" value="1"/>
</dbReference>
<dbReference type="SUPFAM" id="SSF49562">
    <property type="entry name" value="C2 domain (Calcium/lipid-binding domain, CaLB)"/>
    <property type="match status" value="1"/>
</dbReference>
<dbReference type="SUPFAM" id="SSF57889">
    <property type="entry name" value="Cysteine-rich domain"/>
    <property type="match status" value="2"/>
</dbReference>
<dbReference type="SUPFAM" id="SSF56112">
    <property type="entry name" value="Protein kinase-like (PK-like)"/>
    <property type="match status" value="1"/>
</dbReference>
<dbReference type="PROSITE" id="PS51285">
    <property type="entry name" value="AGC_KINASE_CTER"/>
    <property type="match status" value="1"/>
</dbReference>
<dbReference type="PROSITE" id="PS50004">
    <property type="entry name" value="C2"/>
    <property type="match status" value="1"/>
</dbReference>
<dbReference type="PROSITE" id="PS00107">
    <property type="entry name" value="PROTEIN_KINASE_ATP"/>
    <property type="match status" value="1"/>
</dbReference>
<dbReference type="PROSITE" id="PS50011">
    <property type="entry name" value="PROTEIN_KINASE_DOM"/>
    <property type="match status" value="1"/>
</dbReference>
<dbReference type="PROSITE" id="PS00108">
    <property type="entry name" value="PROTEIN_KINASE_ST"/>
    <property type="match status" value="1"/>
</dbReference>
<dbReference type="PROSITE" id="PS00479">
    <property type="entry name" value="ZF_DAG_PE_1"/>
    <property type="match status" value="2"/>
</dbReference>
<dbReference type="PROSITE" id="PS50081">
    <property type="entry name" value="ZF_DAG_PE_2"/>
    <property type="match status" value="2"/>
</dbReference>
<protein>
    <recommendedName>
        <fullName>Protein kinase C beta type</fullName>
        <shortName>PKC-B</shortName>
        <shortName>PKC-beta</shortName>
        <ecNumber evidence="2">2.7.11.13</ecNumber>
    </recommendedName>
</protein>
<evidence type="ECO:0000250" key="1"/>
<evidence type="ECO:0000250" key="2">
    <source>
        <dbReference type="UniProtKB" id="P05771"/>
    </source>
</evidence>
<evidence type="ECO:0000250" key="3">
    <source>
        <dbReference type="UniProtKB" id="P68403"/>
    </source>
</evidence>
<evidence type="ECO:0000255" key="4">
    <source>
        <dbReference type="PROSITE-ProRule" id="PRU00041"/>
    </source>
</evidence>
<evidence type="ECO:0000255" key="5">
    <source>
        <dbReference type="PROSITE-ProRule" id="PRU00159"/>
    </source>
</evidence>
<evidence type="ECO:0000255" key="6">
    <source>
        <dbReference type="PROSITE-ProRule" id="PRU00226"/>
    </source>
</evidence>
<evidence type="ECO:0000255" key="7">
    <source>
        <dbReference type="PROSITE-ProRule" id="PRU00618"/>
    </source>
</evidence>
<evidence type="ECO:0000255" key="8">
    <source>
        <dbReference type="PROSITE-ProRule" id="PRU10027"/>
    </source>
</evidence>
<evidence type="ECO:0000305" key="9"/>